<reference key="1">
    <citation type="journal article" date="2005" name="Blood">
        <title>RhoH, a hematopoietic-specific Rho GTPase, regulates proliferation, survival, migration, and engraftment of hematopoietic progenitor cells.</title>
        <authorList>
            <person name="Gu Y."/>
            <person name="Jasti A.C."/>
            <person name="Jansen M."/>
            <person name="Siefring J.E."/>
        </authorList>
    </citation>
    <scope>NUCLEOTIDE SEQUENCE [MRNA]</scope>
    <scope>FUNCTION</scope>
    <scope>TISSUE SPECIFICITY</scope>
</reference>
<reference key="2">
    <citation type="journal article" date="2005" name="Science">
        <title>The transcriptional landscape of the mammalian genome.</title>
        <authorList>
            <person name="Carninci P."/>
            <person name="Kasukawa T."/>
            <person name="Katayama S."/>
            <person name="Gough J."/>
            <person name="Frith M.C."/>
            <person name="Maeda N."/>
            <person name="Oyama R."/>
            <person name="Ravasi T."/>
            <person name="Lenhard B."/>
            <person name="Wells C."/>
            <person name="Kodzius R."/>
            <person name="Shimokawa K."/>
            <person name="Bajic V.B."/>
            <person name="Brenner S.E."/>
            <person name="Batalov S."/>
            <person name="Forrest A.R."/>
            <person name="Zavolan M."/>
            <person name="Davis M.J."/>
            <person name="Wilming L.G."/>
            <person name="Aidinis V."/>
            <person name="Allen J.E."/>
            <person name="Ambesi-Impiombato A."/>
            <person name="Apweiler R."/>
            <person name="Aturaliya R.N."/>
            <person name="Bailey T.L."/>
            <person name="Bansal M."/>
            <person name="Baxter L."/>
            <person name="Beisel K.W."/>
            <person name="Bersano T."/>
            <person name="Bono H."/>
            <person name="Chalk A.M."/>
            <person name="Chiu K.P."/>
            <person name="Choudhary V."/>
            <person name="Christoffels A."/>
            <person name="Clutterbuck D.R."/>
            <person name="Crowe M.L."/>
            <person name="Dalla E."/>
            <person name="Dalrymple B.P."/>
            <person name="de Bono B."/>
            <person name="Della Gatta G."/>
            <person name="di Bernardo D."/>
            <person name="Down T."/>
            <person name="Engstrom P."/>
            <person name="Fagiolini M."/>
            <person name="Faulkner G."/>
            <person name="Fletcher C.F."/>
            <person name="Fukushima T."/>
            <person name="Furuno M."/>
            <person name="Futaki S."/>
            <person name="Gariboldi M."/>
            <person name="Georgii-Hemming P."/>
            <person name="Gingeras T.R."/>
            <person name="Gojobori T."/>
            <person name="Green R.E."/>
            <person name="Gustincich S."/>
            <person name="Harbers M."/>
            <person name="Hayashi Y."/>
            <person name="Hensch T.K."/>
            <person name="Hirokawa N."/>
            <person name="Hill D."/>
            <person name="Huminiecki L."/>
            <person name="Iacono M."/>
            <person name="Ikeo K."/>
            <person name="Iwama A."/>
            <person name="Ishikawa T."/>
            <person name="Jakt M."/>
            <person name="Kanapin A."/>
            <person name="Katoh M."/>
            <person name="Kawasawa Y."/>
            <person name="Kelso J."/>
            <person name="Kitamura H."/>
            <person name="Kitano H."/>
            <person name="Kollias G."/>
            <person name="Krishnan S.P."/>
            <person name="Kruger A."/>
            <person name="Kummerfeld S.K."/>
            <person name="Kurochkin I.V."/>
            <person name="Lareau L.F."/>
            <person name="Lazarevic D."/>
            <person name="Lipovich L."/>
            <person name="Liu J."/>
            <person name="Liuni S."/>
            <person name="McWilliam S."/>
            <person name="Madan Babu M."/>
            <person name="Madera M."/>
            <person name="Marchionni L."/>
            <person name="Matsuda H."/>
            <person name="Matsuzawa S."/>
            <person name="Miki H."/>
            <person name="Mignone F."/>
            <person name="Miyake S."/>
            <person name="Morris K."/>
            <person name="Mottagui-Tabar S."/>
            <person name="Mulder N."/>
            <person name="Nakano N."/>
            <person name="Nakauchi H."/>
            <person name="Ng P."/>
            <person name="Nilsson R."/>
            <person name="Nishiguchi S."/>
            <person name="Nishikawa S."/>
            <person name="Nori F."/>
            <person name="Ohara O."/>
            <person name="Okazaki Y."/>
            <person name="Orlando V."/>
            <person name="Pang K.C."/>
            <person name="Pavan W.J."/>
            <person name="Pavesi G."/>
            <person name="Pesole G."/>
            <person name="Petrovsky N."/>
            <person name="Piazza S."/>
            <person name="Reed J."/>
            <person name="Reid J.F."/>
            <person name="Ring B.Z."/>
            <person name="Ringwald M."/>
            <person name="Rost B."/>
            <person name="Ruan Y."/>
            <person name="Salzberg S.L."/>
            <person name="Sandelin A."/>
            <person name="Schneider C."/>
            <person name="Schoenbach C."/>
            <person name="Sekiguchi K."/>
            <person name="Semple C.A."/>
            <person name="Seno S."/>
            <person name="Sessa L."/>
            <person name="Sheng Y."/>
            <person name="Shibata Y."/>
            <person name="Shimada H."/>
            <person name="Shimada K."/>
            <person name="Silva D."/>
            <person name="Sinclair B."/>
            <person name="Sperling S."/>
            <person name="Stupka E."/>
            <person name="Sugiura K."/>
            <person name="Sultana R."/>
            <person name="Takenaka Y."/>
            <person name="Taki K."/>
            <person name="Tammoja K."/>
            <person name="Tan S.L."/>
            <person name="Tang S."/>
            <person name="Taylor M.S."/>
            <person name="Tegner J."/>
            <person name="Teichmann S.A."/>
            <person name="Ueda H.R."/>
            <person name="van Nimwegen E."/>
            <person name="Verardo R."/>
            <person name="Wei C.L."/>
            <person name="Yagi K."/>
            <person name="Yamanishi H."/>
            <person name="Zabarovsky E."/>
            <person name="Zhu S."/>
            <person name="Zimmer A."/>
            <person name="Hide W."/>
            <person name="Bult C."/>
            <person name="Grimmond S.M."/>
            <person name="Teasdale R.D."/>
            <person name="Liu E.T."/>
            <person name="Brusic V."/>
            <person name="Quackenbush J."/>
            <person name="Wahlestedt C."/>
            <person name="Mattick J.S."/>
            <person name="Hume D.A."/>
            <person name="Kai C."/>
            <person name="Sasaki D."/>
            <person name="Tomaru Y."/>
            <person name="Fukuda S."/>
            <person name="Kanamori-Katayama M."/>
            <person name="Suzuki M."/>
            <person name="Aoki J."/>
            <person name="Arakawa T."/>
            <person name="Iida J."/>
            <person name="Imamura K."/>
            <person name="Itoh M."/>
            <person name="Kato T."/>
            <person name="Kawaji H."/>
            <person name="Kawagashira N."/>
            <person name="Kawashima T."/>
            <person name="Kojima M."/>
            <person name="Kondo S."/>
            <person name="Konno H."/>
            <person name="Nakano K."/>
            <person name="Ninomiya N."/>
            <person name="Nishio T."/>
            <person name="Okada M."/>
            <person name="Plessy C."/>
            <person name="Shibata K."/>
            <person name="Shiraki T."/>
            <person name="Suzuki S."/>
            <person name="Tagami M."/>
            <person name="Waki K."/>
            <person name="Watahiki A."/>
            <person name="Okamura-Oho Y."/>
            <person name="Suzuki H."/>
            <person name="Kawai J."/>
            <person name="Hayashizaki Y."/>
        </authorList>
    </citation>
    <scope>NUCLEOTIDE SEQUENCE [LARGE SCALE MRNA]</scope>
    <source>
        <strain>C57BL/6J</strain>
        <tissue>Thymus</tissue>
    </source>
</reference>
<reference key="3">
    <citation type="journal article" date="2006" name="Nat. Immunol.">
        <title>RhoH GTPase recruits and activates Zap70 required for T cell receptor signaling and thymocyte development.</title>
        <authorList>
            <person name="Gu Y."/>
            <person name="Chae H.-D."/>
            <person name="Siefring J.E."/>
            <person name="Jasti A.C."/>
            <person name="Hildeman D.A."/>
            <person name="Williams D.A."/>
        </authorList>
    </citation>
    <scope>FUNCTION</scope>
    <scope>INTERACTION WITH ZAP70</scope>
    <scope>SUBCELLULAR LOCATION</scope>
    <scope>PHOSPHORYLATION</scope>
    <scope>MUTAGENESIS OF TYR-73 AND TYR-83</scope>
    <scope>DISRUPTION PHENOTYPE</scope>
</reference>
<reference key="4">
    <citation type="journal article" date="2007" name="Blood">
        <title>RhoH is important for positive thymocyte selection and T-cell receptor signaling.</title>
        <authorList>
            <person name="Dorn T."/>
            <person name="Kuhn U."/>
            <person name="Bungartz G."/>
            <person name="Stiller S."/>
            <person name="Bauer M."/>
            <person name="Ellwart J."/>
            <person name="Peters T."/>
            <person name="Scharffetter-Kochanek K."/>
            <person name="Semmrich M."/>
            <person name="Laschinger M."/>
            <person name="Holzmann B."/>
            <person name="Klinkert W.E.F."/>
            <person name="Straten P.T."/>
            <person name="Kollgaard T."/>
            <person name="Sixt M."/>
            <person name="Brakebusch C."/>
        </authorList>
    </citation>
    <scope>FUNCTION</scope>
    <scope>DISRUPTION PHENOTYPE</scope>
    <scope>DEVELOPMENTAL STAGE</scope>
</reference>
<reference key="5">
    <citation type="journal article" date="2009" name="J. Immunol.">
        <title>RhoH plays critical roles in Fc epsilon RI-dependent signal transduction in mast cells.</title>
        <authorList>
            <person name="Oda H."/>
            <person name="Fujimoto M."/>
            <person name="Patrick M.S."/>
            <person name="Chida D."/>
            <person name="Sato Y."/>
            <person name="Azuma Y."/>
            <person name="Aoki H."/>
            <person name="Abe T."/>
            <person name="Suzuki H."/>
            <person name="Shirai M."/>
        </authorList>
    </citation>
    <scope>FUNCTION</scope>
    <scope>DISRUPTION PHENOTYPE</scope>
    <scope>INTERACTION WITH SYK</scope>
    <scope>TISSUE SPECIFICITY</scope>
</reference>
<reference key="6">
    <citation type="journal article" date="2009" name="J. Immunol.">
        <title>RhoH/TTF negatively regulates leukotriene production in neutrophils.</title>
        <authorList>
            <person name="Daryadel A."/>
            <person name="Yousefi S."/>
            <person name="Troi D."/>
            <person name="Schmid I."/>
            <person name="Schmidt-Mende J."/>
            <person name="Mordasini C."/>
            <person name="Dahinden C.A."/>
            <person name="Ziemiecki A."/>
            <person name="Simon H.-U."/>
        </authorList>
    </citation>
    <scope>INDUCTION</scope>
</reference>
<reference key="7">
    <citation type="journal article" date="2010" name="Cell">
        <title>A tissue-specific atlas of mouse protein phosphorylation and expression.</title>
        <authorList>
            <person name="Huttlin E.L."/>
            <person name="Jedrychowski M.P."/>
            <person name="Elias J.E."/>
            <person name="Goswami T."/>
            <person name="Rad R."/>
            <person name="Beausoleil S.A."/>
            <person name="Villen J."/>
            <person name="Haas W."/>
            <person name="Sowa M.E."/>
            <person name="Gygi S.P."/>
        </authorList>
    </citation>
    <scope>IDENTIFICATION BY MASS SPECTROMETRY [LARGE SCALE ANALYSIS]</scope>
    <source>
        <tissue>Spleen</tissue>
    </source>
</reference>
<gene>
    <name type="primary">Rhoh</name>
    <name type="synonym">Arhh</name>
</gene>
<feature type="chain" id="PRO_0000198868" description="Rho-related GTP-binding protein RhoH">
    <location>
        <begin position="1"/>
        <end position="188"/>
    </location>
</feature>
<feature type="propeptide" id="PRO_0000281219" description="Removed in mature form" evidence="1">
    <location>
        <begin position="189"/>
        <end position="191"/>
    </location>
</feature>
<feature type="region of interest" description="Interaction with ZAP70" evidence="3">
    <location>
        <begin position="73"/>
        <end position="86"/>
    </location>
</feature>
<feature type="short sequence motif" description="Effector region" evidence="1">
    <location>
        <begin position="33"/>
        <end position="41"/>
    </location>
</feature>
<feature type="binding site" evidence="1">
    <location>
        <begin position="11"/>
        <end position="18"/>
    </location>
    <ligand>
        <name>GTP</name>
        <dbReference type="ChEBI" id="CHEBI:37565"/>
    </ligand>
</feature>
<feature type="binding site" evidence="1">
    <location>
        <begin position="58"/>
        <end position="62"/>
    </location>
    <ligand>
        <name>GTP</name>
        <dbReference type="ChEBI" id="CHEBI:37565"/>
    </ligand>
</feature>
<feature type="binding site" evidence="1">
    <location>
        <begin position="116"/>
        <end position="119"/>
    </location>
    <ligand>
        <name>GTP</name>
        <dbReference type="ChEBI" id="CHEBI:37565"/>
    </ligand>
</feature>
<feature type="modified residue" description="Cysteine methyl ester" evidence="1">
    <location>
        <position position="188"/>
    </location>
</feature>
<feature type="lipid moiety-binding region" description="S-geranylgeranyl cysteine" evidence="1">
    <location>
        <position position="188"/>
    </location>
</feature>
<feature type="mutagenesis site" description="Abolishes interaction with ZAP70; when associated with F-83." evidence="3">
    <original>Y</original>
    <variation>F</variation>
    <location>
        <position position="73"/>
    </location>
</feature>
<feature type="mutagenesis site" description="Abolishes interaction with ZAP70; when associated with F-73." evidence="3">
    <original>Y</original>
    <variation>F</variation>
    <location>
        <position position="83"/>
    </location>
</feature>
<organism>
    <name type="scientific">Mus musculus</name>
    <name type="common">Mouse</name>
    <dbReference type="NCBI Taxonomy" id="10090"/>
    <lineage>
        <taxon>Eukaryota</taxon>
        <taxon>Metazoa</taxon>
        <taxon>Chordata</taxon>
        <taxon>Craniata</taxon>
        <taxon>Vertebrata</taxon>
        <taxon>Euteleostomi</taxon>
        <taxon>Mammalia</taxon>
        <taxon>Eutheria</taxon>
        <taxon>Euarchontoglires</taxon>
        <taxon>Glires</taxon>
        <taxon>Rodentia</taxon>
        <taxon>Myomorpha</taxon>
        <taxon>Muroidea</taxon>
        <taxon>Muridae</taxon>
        <taxon>Murinae</taxon>
        <taxon>Mus</taxon>
        <taxon>Mus</taxon>
    </lineage>
</organism>
<sequence length="191" mass="21324">MLSSIKCVLVGDSAVGKTSLLVRFTSETFPEAYKPTVYENTGVDVFMDGIQISLGLWDTAGNDAFRSIRPLSYQQADVVLMCYSVANHNSFLNLKNKWISEIRSNLPCTPVLVVATQTDQREVGPHRASCINAIEGKRLAQDVRAKGYLECSALSNRGVQQVFECAVRTAVNQARRRNRRKLFSINECKIF</sequence>
<evidence type="ECO:0000250" key="1"/>
<evidence type="ECO:0000269" key="2">
    <source>
    </source>
</evidence>
<evidence type="ECO:0000269" key="3">
    <source>
    </source>
</evidence>
<evidence type="ECO:0000269" key="4">
    <source>
    </source>
</evidence>
<evidence type="ECO:0000269" key="5">
    <source>
    </source>
</evidence>
<evidence type="ECO:0000305" key="6"/>
<keyword id="KW-1003">Cell membrane</keyword>
<keyword id="KW-0963">Cytoplasm</keyword>
<keyword id="KW-0342">GTP-binding</keyword>
<keyword id="KW-0449">Lipoprotein</keyword>
<keyword id="KW-0472">Membrane</keyword>
<keyword id="KW-0488">Methylation</keyword>
<keyword id="KW-0547">Nucleotide-binding</keyword>
<keyword id="KW-0597">Phosphoprotein</keyword>
<keyword id="KW-0636">Prenylation</keyword>
<keyword id="KW-1185">Reference proteome</keyword>
<name>RHOH_MOUSE</name>
<dbReference type="EMBL" id="AK017885">
    <property type="protein sequence ID" value="BAB30987.1"/>
    <property type="molecule type" value="mRNA"/>
</dbReference>
<dbReference type="CCDS" id="CCDS39100.1"/>
<dbReference type="RefSeq" id="NP_001074574.1">
    <property type="nucleotide sequence ID" value="NM_001081105.2"/>
</dbReference>
<dbReference type="RefSeq" id="NP_001350383.1">
    <property type="nucleotide sequence ID" value="NM_001363454.1"/>
</dbReference>
<dbReference type="RefSeq" id="XP_011239081.1">
    <property type="nucleotide sequence ID" value="XM_011240779.4"/>
</dbReference>
<dbReference type="RefSeq" id="XP_030110721.1">
    <property type="nucleotide sequence ID" value="XM_030254861.2"/>
</dbReference>
<dbReference type="SMR" id="Q9D3G9"/>
<dbReference type="BioGRID" id="216981">
    <property type="interactions" value="3"/>
</dbReference>
<dbReference type="FunCoup" id="Q9D3G9">
    <property type="interactions" value="1190"/>
</dbReference>
<dbReference type="IntAct" id="Q9D3G9">
    <property type="interactions" value="1"/>
</dbReference>
<dbReference type="STRING" id="10090.ENSMUSP00000031106"/>
<dbReference type="iPTMnet" id="Q9D3G9"/>
<dbReference type="PhosphoSitePlus" id="Q9D3G9"/>
<dbReference type="PaxDb" id="10090-ENSMUSP00000031106"/>
<dbReference type="ProteomicsDB" id="255337"/>
<dbReference type="Antibodypedia" id="23555">
    <property type="antibodies" value="259 antibodies from 29 providers"/>
</dbReference>
<dbReference type="DNASU" id="74734"/>
<dbReference type="Ensembl" id="ENSMUST00000031106.8">
    <property type="protein sequence ID" value="ENSMUSP00000031106.5"/>
    <property type="gene ID" value="ENSMUSG00000029204.8"/>
</dbReference>
<dbReference type="Ensembl" id="ENSMUST00000201533.2">
    <property type="protein sequence ID" value="ENSMUSP00000143810.2"/>
    <property type="gene ID" value="ENSMUSG00000029204.8"/>
</dbReference>
<dbReference type="GeneID" id="74734"/>
<dbReference type="KEGG" id="mmu:74734"/>
<dbReference type="UCSC" id="uc008xoc.1">
    <property type="organism name" value="mouse"/>
</dbReference>
<dbReference type="AGR" id="MGI:1921984"/>
<dbReference type="CTD" id="399"/>
<dbReference type="MGI" id="MGI:1921984">
    <property type="gene designation" value="Rhoh"/>
</dbReference>
<dbReference type="VEuPathDB" id="HostDB:ENSMUSG00000029204"/>
<dbReference type="eggNOG" id="KOG0393">
    <property type="taxonomic scope" value="Eukaryota"/>
</dbReference>
<dbReference type="GeneTree" id="ENSGT00940000160078"/>
<dbReference type="HOGENOM" id="CLU_041217_21_3_1"/>
<dbReference type="InParanoid" id="Q9D3G9"/>
<dbReference type="OMA" id="HKWIAEV"/>
<dbReference type="OrthoDB" id="8830751at2759"/>
<dbReference type="PhylomeDB" id="Q9D3G9"/>
<dbReference type="TreeFam" id="TF331219"/>
<dbReference type="BRENDA" id="3.6.5.2">
    <property type="organism ID" value="3474"/>
</dbReference>
<dbReference type="Reactome" id="R-MMU-9013407">
    <property type="pathway name" value="RHOH GTPase cycle"/>
</dbReference>
<dbReference type="BioGRID-ORCS" id="74734">
    <property type="hits" value="2 hits in 77 CRISPR screens"/>
</dbReference>
<dbReference type="PRO" id="PR:Q9D3G9"/>
<dbReference type="Proteomes" id="UP000000589">
    <property type="component" value="Chromosome 5"/>
</dbReference>
<dbReference type="RNAct" id="Q9D3G9">
    <property type="molecule type" value="protein"/>
</dbReference>
<dbReference type="Bgee" id="ENSMUSG00000029204">
    <property type="expression patterns" value="Expressed in thymus and 85 other cell types or tissues"/>
</dbReference>
<dbReference type="ExpressionAtlas" id="Q9D3G9">
    <property type="expression patterns" value="baseline and differential"/>
</dbReference>
<dbReference type="GO" id="GO:0005737">
    <property type="term" value="C:cytoplasm"/>
    <property type="evidence" value="ECO:0000314"/>
    <property type="project" value="UniProtKB"/>
</dbReference>
<dbReference type="GO" id="GO:0001772">
    <property type="term" value="C:immunological synapse"/>
    <property type="evidence" value="ECO:0000314"/>
    <property type="project" value="UniProtKB"/>
</dbReference>
<dbReference type="GO" id="GO:0005886">
    <property type="term" value="C:plasma membrane"/>
    <property type="evidence" value="ECO:0000314"/>
    <property type="project" value="UniProtKB"/>
</dbReference>
<dbReference type="GO" id="GO:0005525">
    <property type="term" value="F:GTP binding"/>
    <property type="evidence" value="ECO:0007669"/>
    <property type="project" value="UniProtKB-KW"/>
</dbReference>
<dbReference type="GO" id="GO:0003924">
    <property type="term" value="F:GTPase activity"/>
    <property type="evidence" value="ECO:0007669"/>
    <property type="project" value="InterPro"/>
</dbReference>
<dbReference type="GO" id="GO:0019210">
    <property type="term" value="F:kinase inhibitor activity"/>
    <property type="evidence" value="ECO:0007669"/>
    <property type="project" value="Ensembl"/>
</dbReference>
<dbReference type="GO" id="GO:0045576">
    <property type="term" value="P:mast cell activation"/>
    <property type="evidence" value="ECO:0000314"/>
    <property type="project" value="UniProtKB"/>
</dbReference>
<dbReference type="GO" id="GO:0043124">
    <property type="term" value="P:negative regulation of canonical NF-kappaB signal transduction"/>
    <property type="evidence" value="ECO:0007669"/>
    <property type="project" value="Ensembl"/>
</dbReference>
<dbReference type="GO" id="GO:0045582">
    <property type="term" value="P:positive regulation of T cell differentiation"/>
    <property type="evidence" value="ECO:0007669"/>
    <property type="project" value="Ensembl"/>
</dbReference>
<dbReference type="GO" id="GO:0007264">
    <property type="term" value="P:small GTPase-mediated signal transduction"/>
    <property type="evidence" value="ECO:0007669"/>
    <property type="project" value="InterPro"/>
</dbReference>
<dbReference type="GO" id="GO:0030217">
    <property type="term" value="P:T cell differentiation"/>
    <property type="evidence" value="ECO:0000314"/>
    <property type="project" value="UniProtKB"/>
</dbReference>
<dbReference type="CDD" id="cd00157">
    <property type="entry name" value="Rho"/>
    <property type="match status" value="1"/>
</dbReference>
<dbReference type="FunFam" id="3.40.50.300:FF:000756">
    <property type="entry name" value="Rho-related GTP-binding protein RhoH"/>
    <property type="match status" value="1"/>
</dbReference>
<dbReference type="Gene3D" id="3.40.50.300">
    <property type="entry name" value="P-loop containing nucleotide triphosphate hydrolases"/>
    <property type="match status" value="1"/>
</dbReference>
<dbReference type="InterPro" id="IPR027417">
    <property type="entry name" value="P-loop_NTPase"/>
</dbReference>
<dbReference type="InterPro" id="IPR005225">
    <property type="entry name" value="Small_GTP-bd"/>
</dbReference>
<dbReference type="InterPro" id="IPR001806">
    <property type="entry name" value="Small_GTPase"/>
</dbReference>
<dbReference type="InterPro" id="IPR003578">
    <property type="entry name" value="Small_GTPase_Rho"/>
</dbReference>
<dbReference type="NCBIfam" id="TIGR00231">
    <property type="entry name" value="small_GTP"/>
    <property type="match status" value="1"/>
</dbReference>
<dbReference type="PANTHER" id="PTHR24072">
    <property type="entry name" value="RHO FAMILY GTPASE"/>
    <property type="match status" value="1"/>
</dbReference>
<dbReference type="Pfam" id="PF00071">
    <property type="entry name" value="Ras"/>
    <property type="match status" value="1"/>
</dbReference>
<dbReference type="PRINTS" id="PR00449">
    <property type="entry name" value="RASTRNSFRMNG"/>
</dbReference>
<dbReference type="SMART" id="SM00175">
    <property type="entry name" value="RAB"/>
    <property type="match status" value="1"/>
</dbReference>
<dbReference type="SMART" id="SM00173">
    <property type="entry name" value="RAS"/>
    <property type="match status" value="1"/>
</dbReference>
<dbReference type="SMART" id="SM00174">
    <property type="entry name" value="RHO"/>
    <property type="match status" value="1"/>
</dbReference>
<dbReference type="SUPFAM" id="SSF52540">
    <property type="entry name" value="P-loop containing nucleoside triphosphate hydrolases"/>
    <property type="match status" value="1"/>
</dbReference>
<dbReference type="PROSITE" id="PS51420">
    <property type="entry name" value="RHO"/>
    <property type="match status" value="1"/>
</dbReference>
<accession>Q9D3G9</accession>
<protein>
    <recommendedName>
        <fullName>Rho-related GTP-binding protein RhoH</fullName>
    </recommendedName>
</protein>
<proteinExistence type="evidence at protein level"/>
<comment type="function">
    <text evidence="1 2 3 4 5">Binds GTP but lacks intrinsic GTPase activity and is resistant to Rho-specific GTPase-activating proteins. Inhibits the activation of NF-kappa-B by TNF and IKKB and the activation of CRK/p38 by TNF. Inhibits activities of RAC1, RHOA and CDC42. Negatively regulates leukotriene production in neutrophils (By similarity). Negative regulator of hematopoietic progenitor cell proliferation, survival and migration. Critical regulator of thymocyte development and T-cell antigen receptor (TCR) signaling by mediating recruitment and activation of ZAP70 (PubMed:17028588). Required for phosphorylation of CD3Z, membrane translocation of ZAP70 and subsequent activation of the ZAP70-mediated pathways. Essential for efficient beta-selection and positive selection by promoting the ZAP70-dependent phosphorylation of the LAT signalosome during pre-TCR and TCR signaling. Crucial for thymocyte maturation during DN3 to DN4 transition and during positive selection. Plays critical roles in mast cell function by facilitating phosphorylation of SYK in Fc epsilon RI-mediated signal transduction. Essential for the phosphorylation of LAT, LCP2, PLCG1 and PLCG2 and for Ca(2+) mobilization in mast cells.</text>
</comment>
<comment type="subunit">
    <text evidence="1 3 5">Interacts with GDI1 and GDI2 (By similarity). Interacts with ZAP70 (via SH2 domains) and the interaction is enhanced by its phosphorylation by LCK. Interacts with SYK and the interaction is enhanced by its phosphorylation by FYN.</text>
</comment>
<comment type="subcellular location">
    <subcellularLocation>
        <location evidence="3">Cytoplasm</location>
    </subcellularLocation>
    <subcellularLocation>
        <location evidence="3">Cell membrane</location>
        <topology evidence="3">Lipid-anchor</topology>
        <orientation evidence="3">Cytoplasmic side</orientation>
    </subcellularLocation>
    <text>Colocalizes together with ZAP70 in the immunological synapse.</text>
</comment>
<comment type="tissue specificity">
    <text evidence="2 5">Expression is widespread in hematopoietic cells, including in bone marrow progenitor cells and in differentiated myeloid as well as lymphoid cells. Expressed at high levels in the thymus and mast cells, found in spleen and low-density bone marrow (LDBM) cells and is detected at a low level in neutrophils. In the thymus it is detected in thymocytes of the thymic cortex but not in non-lymphoid cells of fibrovascular and fibroadipose tissues. Expressed in T-cells, B-cells and mast cells.</text>
</comment>
<comment type="developmental stage">
    <text evidence="4">Expressed at all stages of thymocyte development, with relative peaks at the DN3 and DP stages.</text>
</comment>
<comment type="domain">
    <text>The region involved in interaction with ZAP70 is a non-canonical immunoreceptor tyrosine-based activation motif (ITAM).</text>
</comment>
<comment type="PTM">
    <text evidence="3">Phosphorylated on tyrosine by LCK. Phosphorylated by FYN. Phosphorylation enhances the interactions with ZAP70 and SYK and is critical for its function in thymocyte development.</text>
</comment>
<comment type="disruption phenotype">
    <text evidence="3 4 5">Knockout mice have smaller thymuses than wild-type animals, and T-cell lymphopenia due to defects in T-cell maturation and population expansion in the thymus (PubMed:17028588). Mice show impaired passive systemic anaphylaxis and histamine release upon challenge with the specific antigen.</text>
</comment>
<comment type="similarity">
    <text evidence="6">Belongs to the small GTPase superfamily. Rho family.</text>
</comment>